<name>RL13_ECOLU</name>
<comment type="function">
    <text evidence="1">This protein is one of the early assembly proteins of the 50S ribosomal subunit, although it is not seen to bind rRNA by itself. It is important during the early stages of 50S assembly.</text>
</comment>
<comment type="subunit">
    <text evidence="1">Part of the 50S ribosomal subunit.</text>
</comment>
<comment type="similarity">
    <text evidence="1">Belongs to the universal ribosomal protein uL13 family.</text>
</comment>
<keyword id="KW-0687">Ribonucleoprotein</keyword>
<keyword id="KW-0689">Ribosomal protein</keyword>
<evidence type="ECO:0000255" key="1">
    <source>
        <dbReference type="HAMAP-Rule" id="MF_01366"/>
    </source>
</evidence>
<evidence type="ECO:0000305" key="2"/>
<feature type="chain" id="PRO_1000144125" description="Large ribosomal subunit protein uL13">
    <location>
        <begin position="1"/>
        <end position="142"/>
    </location>
</feature>
<proteinExistence type="inferred from homology"/>
<dbReference type="EMBL" id="CU928163">
    <property type="protein sequence ID" value="CAR14859.1"/>
    <property type="molecule type" value="Genomic_DNA"/>
</dbReference>
<dbReference type="RefSeq" id="WP_000847559.1">
    <property type="nucleotide sequence ID" value="NC_011751.1"/>
</dbReference>
<dbReference type="RefSeq" id="YP_002414364.1">
    <property type="nucleotide sequence ID" value="NC_011751.1"/>
</dbReference>
<dbReference type="SMR" id="B7NDK9"/>
<dbReference type="STRING" id="585056.ECUMN_3705"/>
<dbReference type="GeneID" id="89518067"/>
<dbReference type="KEGG" id="eum:ECUMN_3705"/>
<dbReference type="PATRIC" id="fig|585056.7.peg.3888"/>
<dbReference type="HOGENOM" id="CLU_082184_2_2_6"/>
<dbReference type="Proteomes" id="UP000007097">
    <property type="component" value="Chromosome"/>
</dbReference>
<dbReference type="GO" id="GO:0022625">
    <property type="term" value="C:cytosolic large ribosomal subunit"/>
    <property type="evidence" value="ECO:0007669"/>
    <property type="project" value="TreeGrafter"/>
</dbReference>
<dbReference type="GO" id="GO:0003729">
    <property type="term" value="F:mRNA binding"/>
    <property type="evidence" value="ECO:0007669"/>
    <property type="project" value="TreeGrafter"/>
</dbReference>
<dbReference type="GO" id="GO:0003735">
    <property type="term" value="F:structural constituent of ribosome"/>
    <property type="evidence" value="ECO:0007669"/>
    <property type="project" value="InterPro"/>
</dbReference>
<dbReference type="GO" id="GO:0017148">
    <property type="term" value="P:negative regulation of translation"/>
    <property type="evidence" value="ECO:0007669"/>
    <property type="project" value="TreeGrafter"/>
</dbReference>
<dbReference type="GO" id="GO:0006412">
    <property type="term" value="P:translation"/>
    <property type="evidence" value="ECO:0007669"/>
    <property type="project" value="UniProtKB-UniRule"/>
</dbReference>
<dbReference type="CDD" id="cd00392">
    <property type="entry name" value="Ribosomal_L13"/>
    <property type="match status" value="1"/>
</dbReference>
<dbReference type="FunFam" id="3.90.1180.10:FF:000001">
    <property type="entry name" value="50S ribosomal protein L13"/>
    <property type="match status" value="1"/>
</dbReference>
<dbReference type="Gene3D" id="3.90.1180.10">
    <property type="entry name" value="Ribosomal protein L13"/>
    <property type="match status" value="1"/>
</dbReference>
<dbReference type="HAMAP" id="MF_01366">
    <property type="entry name" value="Ribosomal_uL13"/>
    <property type="match status" value="1"/>
</dbReference>
<dbReference type="InterPro" id="IPR005822">
    <property type="entry name" value="Ribosomal_uL13"/>
</dbReference>
<dbReference type="InterPro" id="IPR005823">
    <property type="entry name" value="Ribosomal_uL13_bac-type"/>
</dbReference>
<dbReference type="InterPro" id="IPR023563">
    <property type="entry name" value="Ribosomal_uL13_CS"/>
</dbReference>
<dbReference type="InterPro" id="IPR036899">
    <property type="entry name" value="Ribosomal_uL13_sf"/>
</dbReference>
<dbReference type="NCBIfam" id="TIGR01066">
    <property type="entry name" value="rplM_bact"/>
    <property type="match status" value="1"/>
</dbReference>
<dbReference type="PANTHER" id="PTHR11545:SF2">
    <property type="entry name" value="LARGE RIBOSOMAL SUBUNIT PROTEIN UL13M"/>
    <property type="match status" value="1"/>
</dbReference>
<dbReference type="PANTHER" id="PTHR11545">
    <property type="entry name" value="RIBOSOMAL PROTEIN L13"/>
    <property type="match status" value="1"/>
</dbReference>
<dbReference type="Pfam" id="PF00572">
    <property type="entry name" value="Ribosomal_L13"/>
    <property type="match status" value="1"/>
</dbReference>
<dbReference type="PIRSF" id="PIRSF002181">
    <property type="entry name" value="Ribosomal_L13"/>
    <property type="match status" value="1"/>
</dbReference>
<dbReference type="SUPFAM" id="SSF52161">
    <property type="entry name" value="Ribosomal protein L13"/>
    <property type="match status" value="1"/>
</dbReference>
<dbReference type="PROSITE" id="PS00783">
    <property type="entry name" value="RIBOSOMAL_L13"/>
    <property type="match status" value="1"/>
</dbReference>
<reference key="1">
    <citation type="journal article" date="2009" name="PLoS Genet.">
        <title>Organised genome dynamics in the Escherichia coli species results in highly diverse adaptive paths.</title>
        <authorList>
            <person name="Touchon M."/>
            <person name="Hoede C."/>
            <person name="Tenaillon O."/>
            <person name="Barbe V."/>
            <person name="Baeriswyl S."/>
            <person name="Bidet P."/>
            <person name="Bingen E."/>
            <person name="Bonacorsi S."/>
            <person name="Bouchier C."/>
            <person name="Bouvet O."/>
            <person name="Calteau A."/>
            <person name="Chiapello H."/>
            <person name="Clermont O."/>
            <person name="Cruveiller S."/>
            <person name="Danchin A."/>
            <person name="Diard M."/>
            <person name="Dossat C."/>
            <person name="Karoui M.E."/>
            <person name="Frapy E."/>
            <person name="Garry L."/>
            <person name="Ghigo J.M."/>
            <person name="Gilles A.M."/>
            <person name="Johnson J."/>
            <person name="Le Bouguenec C."/>
            <person name="Lescat M."/>
            <person name="Mangenot S."/>
            <person name="Martinez-Jehanne V."/>
            <person name="Matic I."/>
            <person name="Nassif X."/>
            <person name="Oztas S."/>
            <person name="Petit M.A."/>
            <person name="Pichon C."/>
            <person name="Rouy Z."/>
            <person name="Ruf C.S."/>
            <person name="Schneider D."/>
            <person name="Tourret J."/>
            <person name="Vacherie B."/>
            <person name="Vallenet D."/>
            <person name="Medigue C."/>
            <person name="Rocha E.P.C."/>
            <person name="Denamur E."/>
        </authorList>
    </citation>
    <scope>NUCLEOTIDE SEQUENCE [LARGE SCALE GENOMIC DNA]</scope>
    <source>
        <strain>UMN026 / ExPEC</strain>
    </source>
</reference>
<protein>
    <recommendedName>
        <fullName evidence="1">Large ribosomal subunit protein uL13</fullName>
    </recommendedName>
    <alternativeName>
        <fullName evidence="2">50S ribosomal protein L13</fullName>
    </alternativeName>
</protein>
<gene>
    <name evidence="1" type="primary">rplM</name>
    <name type="ordered locus">ECUMN_3705</name>
</gene>
<accession>B7NDK9</accession>
<sequence>MKTFTAKPETVKRDWYVVDATGKTLGRLATELARRLRGKHKAEYTPHVDTGDYIIVLNADKVAVTGNKRTDKVYYHHTGHIGGIKQATFEEMIARRPERVIEIAVKGMLPKGPLGRAMFRKLKVYAGNEHNHAAQQPQVLDI</sequence>
<organism>
    <name type="scientific">Escherichia coli O17:K52:H18 (strain UMN026 / ExPEC)</name>
    <dbReference type="NCBI Taxonomy" id="585056"/>
    <lineage>
        <taxon>Bacteria</taxon>
        <taxon>Pseudomonadati</taxon>
        <taxon>Pseudomonadota</taxon>
        <taxon>Gammaproteobacteria</taxon>
        <taxon>Enterobacterales</taxon>
        <taxon>Enterobacteriaceae</taxon>
        <taxon>Escherichia</taxon>
    </lineage>
</organism>